<name>RLME_RALN1</name>
<gene>
    <name evidence="1" type="primary">rlmE</name>
    <name evidence="1" type="synonym">ftsJ</name>
    <name evidence="1" type="synonym">rrmJ</name>
    <name type="ordered locus">RSc1525</name>
    <name type="ORF">RS04752</name>
</gene>
<protein>
    <recommendedName>
        <fullName evidence="1">Ribosomal RNA large subunit methyltransferase E</fullName>
        <ecNumber evidence="1">2.1.1.166</ecNumber>
    </recommendedName>
    <alternativeName>
        <fullName evidence="1">23S rRNA Um2552 methyltransferase</fullName>
    </alternativeName>
    <alternativeName>
        <fullName evidence="1">rRNA (uridine-2'-O-)-methyltransferase</fullName>
    </alternativeName>
</protein>
<organism>
    <name type="scientific">Ralstonia nicotianae (strain ATCC BAA-1114 / GMI1000)</name>
    <name type="common">Ralstonia solanacearum</name>
    <dbReference type="NCBI Taxonomy" id="267608"/>
    <lineage>
        <taxon>Bacteria</taxon>
        <taxon>Pseudomonadati</taxon>
        <taxon>Pseudomonadota</taxon>
        <taxon>Betaproteobacteria</taxon>
        <taxon>Burkholderiales</taxon>
        <taxon>Burkholderiaceae</taxon>
        <taxon>Ralstonia</taxon>
        <taxon>Ralstonia solanacearum species complex</taxon>
    </lineage>
</organism>
<reference key="1">
    <citation type="journal article" date="2002" name="Nature">
        <title>Genome sequence of the plant pathogen Ralstonia solanacearum.</title>
        <authorList>
            <person name="Salanoubat M."/>
            <person name="Genin S."/>
            <person name="Artiguenave F."/>
            <person name="Gouzy J."/>
            <person name="Mangenot S."/>
            <person name="Arlat M."/>
            <person name="Billault A."/>
            <person name="Brottier P."/>
            <person name="Camus J.-C."/>
            <person name="Cattolico L."/>
            <person name="Chandler M."/>
            <person name="Choisne N."/>
            <person name="Claudel-Renard C."/>
            <person name="Cunnac S."/>
            <person name="Demange N."/>
            <person name="Gaspin C."/>
            <person name="Lavie M."/>
            <person name="Moisan A."/>
            <person name="Robert C."/>
            <person name="Saurin W."/>
            <person name="Schiex T."/>
            <person name="Siguier P."/>
            <person name="Thebault P."/>
            <person name="Whalen M."/>
            <person name="Wincker P."/>
            <person name="Levy M."/>
            <person name="Weissenbach J."/>
            <person name="Boucher C.A."/>
        </authorList>
    </citation>
    <scope>NUCLEOTIDE SEQUENCE [LARGE SCALE GENOMIC DNA]</scope>
    <source>
        <strain>ATCC BAA-1114 / GMI1000</strain>
    </source>
</reference>
<sequence>MAKNKFNQSWLHDHINDPYVKLAQREGYRARAAYKLKEIDEQDKLIKPGQVIVDLGAAPGSWSQYVRNKLAASPRAKDGRIDGAIVAIDILPMEPVADVTFIQGDFREESVFQQLETIVLDATGGGKVDLVLSDMAPNLSGVASADAARMEHIAELAVEFAQAHLKPEGALLIKCFHGSGYSQIVEMFKRHFRVVAPRKPKASRDKSSETFLLGRQLKHPG</sequence>
<feature type="chain" id="PRO_0000155528" description="Ribosomal RNA large subunit methyltransferase E">
    <location>
        <begin position="1"/>
        <end position="221"/>
    </location>
</feature>
<feature type="region of interest" description="Disordered" evidence="2">
    <location>
        <begin position="199"/>
        <end position="221"/>
    </location>
</feature>
<feature type="active site" description="Proton acceptor" evidence="1">
    <location>
        <position position="174"/>
    </location>
</feature>
<feature type="binding site" evidence="1">
    <location>
        <position position="60"/>
    </location>
    <ligand>
        <name>S-adenosyl-L-methionine</name>
        <dbReference type="ChEBI" id="CHEBI:59789"/>
    </ligand>
</feature>
<feature type="binding site" evidence="1">
    <location>
        <position position="62"/>
    </location>
    <ligand>
        <name>S-adenosyl-L-methionine</name>
        <dbReference type="ChEBI" id="CHEBI:59789"/>
    </ligand>
</feature>
<feature type="binding site" evidence="1">
    <location>
        <position position="89"/>
    </location>
    <ligand>
        <name>S-adenosyl-L-methionine</name>
        <dbReference type="ChEBI" id="CHEBI:59789"/>
    </ligand>
</feature>
<feature type="binding site" evidence="1">
    <location>
        <position position="105"/>
    </location>
    <ligand>
        <name>S-adenosyl-L-methionine</name>
        <dbReference type="ChEBI" id="CHEBI:59789"/>
    </ligand>
</feature>
<feature type="binding site" evidence="1">
    <location>
        <position position="134"/>
    </location>
    <ligand>
        <name>S-adenosyl-L-methionine</name>
        <dbReference type="ChEBI" id="CHEBI:59789"/>
    </ligand>
</feature>
<keyword id="KW-0963">Cytoplasm</keyword>
<keyword id="KW-0489">Methyltransferase</keyword>
<keyword id="KW-1185">Reference proteome</keyword>
<keyword id="KW-0698">rRNA processing</keyword>
<keyword id="KW-0949">S-adenosyl-L-methionine</keyword>
<keyword id="KW-0808">Transferase</keyword>
<dbReference type="EC" id="2.1.1.166" evidence="1"/>
<dbReference type="EMBL" id="AL646052">
    <property type="protein sequence ID" value="CAD15227.1"/>
    <property type="molecule type" value="Genomic_DNA"/>
</dbReference>
<dbReference type="RefSeq" id="WP_011001472.1">
    <property type="nucleotide sequence ID" value="NC_003295.1"/>
</dbReference>
<dbReference type="SMR" id="Q8XZ79"/>
<dbReference type="STRING" id="267608.RSc1525"/>
<dbReference type="EnsemblBacteria" id="CAD15227">
    <property type="protein sequence ID" value="CAD15227"/>
    <property type="gene ID" value="RSc1525"/>
</dbReference>
<dbReference type="KEGG" id="rso:RSc1525"/>
<dbReference type="PATRIC" id="fig|267608.8.peg.1560"/>
<dbReference type="eggNOG" id="COG0293">
    <property type="taxonomic scope" value="Bacteria"/>
</dbReference>
<dbReference type="HOGENOM" id="CLU_009422_4_1_4"/>
<dbReference type="Proteomes" id="UP000001436">
    <property type="component" value="Chromosome"/>
</dbReference>
<dbReference type="GO" id="GO:0005737">
    <property type="term" value="C:cytoplasm"/>
    <property type="evidence" value="ECO:0007669"/>
    <property type="project" value="UniProtKB-SubCell"/>
</dbReference>
<dbReference type="GO" id="GO:0008650">
    <property type="term" value="F:rRNA (uridine-2'-O-)-methyltransferase activity"/>
    <property type="evidence" value="ECO:0007669"/>
    <property type="project" value="UniProtKB-UniRule"/>
</dbReference>
<dbReference type="FunFam" id="3.40.50.150:FF:000005">
    <property type="entry name" value="Ribosomal RNA large subunit methyltransferase E"/>
    <property type="match status" value="1"/>
</dbReference>
<dbReference type="Gene3D" id="3.40.50.150">
    <property type="entry name" value="Vaccinia Virus protein VP39"/>
    <property type="match status" value="1"/>
</dbReference>
<dbReference type="HAMAP" id="MF_01547">
    <property type="entry name" value="RNA_methyltr_E"/>
    <property type="match status" value="1"/>
</dbReference>
<dbReference type="InterPro" id="IPR050082">
    <property type="entry name" value="RNA_methyltr_RlmE"/>
</dbReference>
<dbReference type="InterPro" id="IPR002877">
    <property type="entry name" value="RNA_MeTrfase_FtsJ_dom"/>
</dbReference>
<dbReference type="InterPro" id="IPR015507">
    <property type="entry name" value="rRNA-MeTfrase_E"/>
</dbReference>
<dbReference type="InterPro" id="IPR029063">
    <property type="entry name" value="SAM-dependent_MTases_sf"/>
</dbReference>
<dbReference type="PANTHER" id="PTHR10920">
    <property type="entry name" value="RIBOSOMAL RNA METHYLTRANSFERASE"/>
    <property type="match status" value="1"/>
</dbReference>
<dbReference type="PANTHER" id="PTHR10920:SF18">
    <property type="entry name" value="RRNA METHYLTRANSFERASE 2, MITOCHONDRIAL"/>
    <property type="match status" value="1"/>
</dbReference>
<dbReference type="Pfam" id="PF01728">
    <property type="entry name" value="FtsJ"/>
    <property type="match status" value="1"/>
</dbReference>
<dbReference type="PIRSF" id="PIRSF005461">
    <property type="entry name" value="23S_rRNA_mtase"/>
    <property type="match status" value="1"/>
</dbReference>
<dbReference type="SUPFAM" id="SSF53335">
    <property type="entry name" value="S-adenosyl-L-methionine-dependent methyltransferases"/>
    <property type="match status" value="1"/>
</dbReference>
<proteinExistence type="inferred from homology"/>
<evidence type="ECO:0000255" key="1">
    <source>
        <dbReference type="HAMAP-Rule" id="MF_01547"/>
    </source>
</evidence>
<evidence type="ECO:0000256" key="2">
    <source>
        <dbReference type="SAM" id="MobiDB-lite"/>
    </source>
</evidence>
<comment type="function">
    <text evidence="1">Specifically methylates the uridine in position 2552 of 23S rRNA at the 2'-O position of the ribose in the fully assembled 50S ribosomal subunit.</text>
</comment>
<comment type="catalytic activity">
    <reaction evidence="1">
        <text>uridine(2552) in 23S rRNA + S-adenosyl-L-methionine = 2'-O-methyluridine(2552) in 23S rRNA + S-adenosyl-L-homocysteine + H(+)</text>
        <dbReference type="Rhea" id="RHEA:42720"/>
        <dbReference type="Rhea" id="RHEA-COMP:10202"/>
        <dbReference type="Rhea" id="RHEA-COMP:10203"/>
        <dbReference type="ChEBI" id="CHEBI:15378"/>
        <dbReference type="ChEBI" id="CHEBI:57856"/>
        <dbReference type="ChEBI" id="CHEBI:59789"/>
        <dbReference type="ChEBI" id="CHEBI:65315"/>
        <dbReference type="ChEBI" id="CHEBI:74478"/>
        <dbReference type="EC" id="2.1.1.166"/>
    </reaction>
</comment>
<comment type="subcellular location">
    <subcellularLocation>
        <location evidence="1">Cytoplasm</location>
    </subcellularLocation>
</comment>
<comment type="similarity">
    <text evidence="1">Belongs to the class I-like SAM-binding methyltransferase superfamily. RNA methyltransferase RlmE family.</text>
</comment>
<accession>Q8XZ79</accession>